<proteinExistence type="evidence at transcript level"/>
<protein>
    <recommendedName>
        <fullName>Myozenin-2</fullName>
    </recommendedName>
    <alternativeName>
        <fullName>Calsarcin-1</fullName>
    </alternativeName>
</protein>
<feature type="chain" id="PRO_0000111098" description="Myozenin-2">
    <location>
        <begin position="1"/>
        <end position="264"/>
    </location>
</feature>
<feature type="region of interest" description="Disordered" evidence="3">
    <location>
        <begin position="98"/>
        <end position="134"/>
    </location>
</feature>
<feature type="compositionally biased region" description="Pro residues" evidence="3">
    <location>
        <begin position="106"/>
        <end position="120"/>
    </location>
</feature>
<feature type="modified residue" description="Omega-N-methylarginine" evidence="2">
    <location>
        <position position="53"/>
    </location>
</feature>
<feature type="modified residue" description="Phosphoserine" evidence="2">
    <location>
        <position position="101"/>
    </location>
</feature>
<feature type="modified residue" description="Phosphothreonine" evidence="2">
    <location>
        <position position="107"/>
    </location>
</feature>
<feature type="modified residue" description="Phosphothreonine" evidence="2">
    <location>
        <position position="111"/>
    </location>
</feature>
<feature type="modified residue" description="Phosphoserine" evidence="2">
    <location>
        <position position="116"/>
    </location>
</feature>
<feature type="sequence conflict" description="In Ref. 2; AAI03122." evidence="4" ref="2">
    <original>I</original>
    <variation>V</variation>
    <location>
        <position position="22"/>
    </location>
</feature>
<name>MYOZ2_BOVIN</name>
<reference key="1">
    <citation type="journal article" date="2005" name="BMC Genomics">
        <title>Characterization of 954 bovine full-CDS cDNA sequences.</title>
        <authorList>
            <person name="Harhay G.P."/>
            <person name="Sonstegard T.S."/>
            <person name="Keele J.W."/>
            <person name="Heaton M.P."/>
            <person name="Clawson M.L."/>
            <person name="Snelling W.M."/>
            <person name="Wiedmann R.T."/>
            <person name="Van Tassell C.P."/>
            <person name="Smith T.P.L."/>
        </authorList>
    </citation>
    <scope>NUCLEOTIDE SEQUENCE [LARGE SCALE MRNA]</scope>
</reference>
<reference key="2">
    <citation type="submission" date="2005-08" db="EMBL/GenBank/DDBJ databases">
        <authorList>
            <consortium name="NIH - Mammalian Gene Collection (MGC) project"/>
        </authorList>
    </citation>
    <scope>NUCLEOTIDE SEQUENCE [LARGE SCALE MRNA]</scope>
    <source>
        <strain>Hereford</strain>
        <tissue>Heart ventricle</tissue>
    </source>
</reference>
<organism>
    <name type="scientific">Bos taurus</name>
    <name type="common">Bovine</name>
    <dbReference type="NCBI Taxonomy" id="9913"/>
    <lineage>
        <taxon>Eukaryota</taxon>
        <taxon>Metazoa</taxon>
        <taxon>Chordata</taxon>
        <taxon>Craniata</taxon>
        <taxon>Vertebrata</taxon>
        <taxon>Euteleostomi</taxon>
        <taxon>Mammalia</taxon>
        <taxon>Eutheria</taxon>
        <taxon>Laurasiatheria</taxon>
        <taxon>Artiodactyla</taxon>
        <taxon>Ruminantia</taxon>
        <taxon>Pecora</taxon>
        <taxon>Bovidae</taxon>
        <taxon>Bovinae</taxon>
        <taxon>Bos</taxon>
    </lineage>
</organism>
<sequence>MLSHNTMVKQRKQQASAIMKEIHGNDVDVMHLGKKVSIPRDIMLEELSHLSNRGARLFKMRQRRSDKYTFENFQYETKAQINHNIAMQNEKLDGINLESGSQQAPFTPPNTPDPRSPPNPENIAPGYSGPLKEIPPERFNTTAVPKYYQSPWEQAISNDPELLEALYPKFFKPEGKAELPDYRSFNRVATPFGGFEKASKMVKFKVPDFDLLLLTDPRFMAFANPLSGRRSFNRTPKGWISENIPIVITTEPTEDNTIPESEDL</sequence>
<gene>
    <name type="primary">MYOZ2</name>
</gene>
<keyword id="KW-0963">Cytoplasm</keyword>
<keyword id="KW-0488">Methylation</keyword>
<keyword id="KW-0597">Phosphoprotein</keyword>
<keyword id="KW-1185">Reference proteome</keyword>
<accession>Q5E9V3</accession>
<accession>Q3ZBT3</accession>
<dbReference type="EMBL" id="BT020817">
    <property type="protein sequence ID" value="AAX08834.1"/>
    <property type="molecule type" value="mRNA"/>
</dbReference>
<dbReference type="EMBL" id="BC103121">
    <property type="protein sequence ID" value="AAI03122.1"/>
    <property type="molecule type" value="mRNA"/>
</dbReference>
<dbReference type="RefSeq" id="NP_001015676.1">
    <property type="nucleotide sequence ID" value="NM_001015676.1"/>
</dbReference>
<dbReference type="FunCoup" id="Q5E9V3">
    <property type="interactions" value="82"/>
</dbReference>
<dbReference type="STRING" id="9913.ENSBTAP00000003330"/>
<dbReference type="PaxDb" id="9913-ENSBTAP00000003330"/>
<dbReference type="Ensembl" id="ENSBTAT00000003330.7">
    <property type="protein sequence ID" value="ENSBTAP00000003330.5"/>
    <property type="gene ID" value="ENSBTAG00000002574.7"/>
</dbReference>
<dbReference type="GeneID" id="540487"/>
<dbReference type="KEGG" id="bta:540487"/>
<dbReference type="CTD" id="51778"/>
<dbReference type="VEuPathDB" id="HostDB:ENSBTAG00000002574"/>
<dbReference type="VGNC" id="VGNC:31841">
    <property type="gene designation" value="MYOZ2"/>
</dbReference>
<dbReference type="eggNOG" id="ENOG502QVA2">
    <property type="taxonomic scope" value="Eukaryota"/>
</dbReference>
<dbReference type="GeneTree" id="ENSGT00950000183027"/>
<dbReference type="HOGENOM" id="CLU_071316_1_1_1"/>
<dbReference type="InParanoid" id="Q5E9V3"/>
<dbReference type="OMA" id="INHRIAM"/>
<dbReference type="OrthoDB" id="9895914at2759"/>
<dbReference type="TreeFam" id="TF331748"/>
<dbReference type="Proteomes" id="UP000009136">
    <property type="component" value="Chromosome 6"/>
</dbReference>
<dbReference type="Bgee" id="ENSBTAG00000002574">
    <property type="expression patterns" value="Expressed in cardiac ventricle and 67 other cell types or tissues"/>
</dbReference>
<dbReference type="GO" id="GO:0015629">
    <property type="term" value="C:actin cytoskeleton"/>
    <property type="evidence" value="ECO:0000318"/>
    <property type="project" value="GO_Central"/>
</dbReference>
<dbReference type="GO" id="GO:0030018">
    <property type="term" value="C:Z disc"/>
    <property type="evidence" value="ECO:0000318"/>
    <property type="project" value="GO_Central"/>
</dbReference>
<dbReference type="GO" id="GO:0003779">
    <property type="term" value="F:actin binding"/>
    <property type="evidence" value="ECO:0000318"/>
    <property type="project" value="GO_Central"/>
</dbReference>
<dbReference type="GO" id="GO:0051373">
    <property type="term" value="F:FATZ binding"/>
    <property type="evidence" value="ECO:0000318"/>
    <property type="project" value="GO_Central"/>
</dbReference>
<dbReference type="GO" id="GO:0031433">
    <property type="term" value="F:telethonin binding"/>
    <property type="evidence" value="ECO:0000318"/>
    <property type="project" value="GO_Central"/>
</dbReference>
<dbReference type="GO" id="GO:0070885">
    <property type="term" value="P:negative regulation of calcineurin-NFAT signaling cascade"/>
    <property type="evidence" value="ECO:0007669"/>
    <property type="project" value="Ensembl"/>
</dbReference>
<dbReference type="GO" id="GO:0000122">
    <property type="term" value="P:negative regulation of transcription by RNA polymerase II"/>
    <property type="evidence" value="ECO:0007669"/>
    <property type="project" value="Ensembl"/>
</dbReference>
<dbReference type="GO" id="GO:0045214">
    <property type="term" value="P:sarcomere organization"/>
    <property type="evidence" value="ECO:0007669"/>
    <property type="project" value="Ensembl"/>
</dbReference>
<dbReference type="GO" id="GO:0043503">
    <property type="term" value="P:skeletal muscle fiber adaptation"/>
    <property type="evidence" value="ECO:0007669"/>
    <property type="project" value="Ensembl"/>
</dbReference>
<dbReference type="GO" id="GO:0007519">
    <property type="term" value="P:skeletal muscle tissue development"/>
    <property type="evidence" value="ECO:0007669"/>
    <property type="project" value="Ensembl"/>
</dbReference>
<dbReference type="InterPro" id="IPR008438">
    <property type="entry name" value="MYOZ"/>
</dbReference>
<dbReference type="PANTHER" id="PTHR15941">
    <property type="entry name" value="MYOZENIN"/>
    <property type="match status" value="1"/>
</dbReference>
<dbReference type="PANTHER" id="PTHR15941:SF9">
    <property type="entry name" value="MYOZENIN-2"/>
    <property type="match status" value="1"/>
</dbReference>
<dbReference type="Pfam" id="PF05556">
    <property type="entry name" value="Calsarcin"/>
    <property type="match status" value="1"/>
</dbReference>
<comment type="function">
    <text evidence="1">Myozenins may serve as intracellular binding proteins involved in linking Z line proteins such as alpha-actinin, gamma-filamin, TCAP/telethonin, LDB3/ZASP and localizing calcineurin signaling to the sarcomere. Plays an important role in the modulation of calcineurin signaling. May play a role in myofibrillogenesis (By similarity).</text>
</comment>
<comment type="subunit">
    <text evidence="1">Interacts via its C-terminus with spectrin repeats 3 and 4 of ACTN2. Interacts with ACTN1, LDB3, MYOT and PPP3CA (By similarity).</text>
</comment>
<comment type="subcellular location">
    <subcellularLocation>
        <location evidence="1">Cytoplasm</location>
        <location evidence="1">Myofibril</location>
        <location evidence="1">Sarcomere</location>
        <location evidence="1">Z line</location>
    </subcellularLocation>
    <text evidence="1">Colocalizes with ACTN1 and PPP3CA at the Z-line of heart and skeletal muscle.</text>
</comment>
<comment type="similarity">
    <text evidence="4">Belongs to the myozenin family.</text>
</comment>
<evidence type="ECO:0000250" key="1"/>
<evidence type="ECO:0000250" key="2">
    <source>
        <dbReference type="UniProtKB" id="Q9JJW5"/>
    </source>
</evidence>
<evidence type="ECO:0000256" key="3">
    <source>
        <dbReference type="SAM" id="MobiDB-lite"/>
    </source>
</evidence>
<evidence type="ECO:0000305" key="4"/>